<comment type="function">
    <text evidence="1">Specifically catalyzes the NAD or NADP-dependent dehydrogenation of L-aspartate to iminoaspartate.</text>
</comment>
<comment type="catalytic activity">
    <reaction evidence="1">
        <text>L-aspartate + NADP(+) + H2O = oxaloacetate + NH4(+) + NADPH + H(+)</text>
        <dbReference type="Rhea" id="RHEA:11784"/>
        <dbReference type="ChEBI" id="CHEBI:15377"/>
        <dbReference type="ChEBI" id="CHEBI:15378"/>
        <dbReference type="ChEBI" id="CHEBI:16452"/>
        <dbReference type="ChEBI" id="CHEBI:28938"/>
        <dbReference type="ChEBI" id="CHEBI:29991"/>
        <dbReference type="ChEBI" id="CHEBI:57783"/>
        <dbReference type="ChEBI" id="CHEBI:58349"/>
        <dbReference type="EC" id="1.4.1.21"/>
    </reaction>
</comment>
<comment type="catalytic activity">
    <reaction evidence="1">
        <text>L-aspartate + NAD(+) + H2O = oxaloacetate + NH4(+) + NADH + H(+)</text>
        <dbReference type="Rhea" id="RHEA:11788"/>
        <dbReference type="ChEBI" id="CHEBI:15377"/>
        <dbReference type="ChEBI" id="CHEBI:15378"/>
        <dbReference type="ChEBI" id="CHEBI:16452"/>
        <dbReference type="ChEBI" id="CHEBI:28938"/>
        <dbReference type="ChEBI" id="CHEBI:29991"/>
        <dbReference type="ChEBI" id="CHEBI:57540"/>
        <dbReference type="ChEBI" id="CHEBI:57945"/>
        <dbReference type="EC" id="1.4.1.21"/>
    </reaction>
</comment>
<comment type="pathway">
    <text evidence="1">Cofactor biosynthesis; NAD(+) biosynthesis; iminoaspartate from L-aspartate (dehydrogenase route): step 1/1.</text>
</comment>
<comment type="miscellaneous">
    <text evidence="1">The iminoaspartate product is unstable in aqueous solution and can decompose to oxaloacetate and ammonia.</text>
</comment>
<comment type="similarity">
    <text evidence="1">Belongs to the L-aspartate dehydrogenase family.</text>
</comment>
<evidence type="ECO:0000255" key="1">
    <source>
        <dbReference type="HAMAP-Rule" id="MF_01265"/>
    </source>
</evidence>
<sequence length="257" mass="27569">MILMMVGIVGCGAIANLITGFVRDGRVPVKLGFFYDRDLERAENLASMVDGRAVLDVADMLPEVDLVVEAASPEAVRDLVPEILEAGKDVVVMSVGALMDPELREMLVELASLNDATIHVPSGAIVGLDGLKAASMGNIESVKLITRKPPRSLGISMDEKKVLYRGRASEAVKKFPLNINVAAALSLACDRDVDVEIIADPAVDRNVHEVTVRGDFGEFKTITENVRCSVNPKTSVMAAYSAIKLLKSLSENIHIGT</sequence>
<name>ASPD_METTH</name>
<proteinExistence type="inferred from homology"/>
<gene>
    <name evidence="1" type="primary">nadX</name>
    <name type="ordered locus">MTH_973</name>
</gene>
<accession>O27054</accession>
<feature type="chain" id="PRO_0000144900" description="L-aspartate dehydrogenase">
    <location>
        <begin position="1"/>
        <end position="257"/>
    </location>
</feature>
<feature type="active site" evidence="1">
    <location>
        <position position="208"/>
    </location>
</feature>
<feature type="binding site" evidence="1">
    <location>
        <position position="124"/>
    </location>
    <ligand>
        <name>NAD(+)</name>
        <dbReference type="ChEBI" id="CHEBI:57540"/>
    </ligand>
</feature>
<feature type="binding site" evidence="1">
    <location>
        <position position="180"/>
    </location>
    <ligand>
        <name>NAD(+)</name>
        <dbReference type="ChEBI" id="CHEBI:57540"/>
    </ligand>
</feature>
<protein>
    <recommendedName>
        <fullName evidence="1">L-aspartate dehydrogenase</fullName>
        <ecNumber evidence="1">1.4.1.21</ecNumber>
    </recommendedName>
</protein>
<keyword id="KW-0520">NAD</keyword>
<keyword id="KW-0521">NADP</keyword>
<keyword id="KW-0560">Oxidoreductase</keyword>
<keyword id="KW-0662">Pyridine nucleotide biosynthesis</keyword>
<keyword id="KW-1185">Reference proteome</keyword>
<reference key="1">
    <citation type="journal article" date="1997" name="J. Bacteriol.">
        <title>Complete genome sequence of Methanobacterium thermoautotrophicum deltaH: functional analysis and comparative genomics.</title>
        <authorList>
            <person name="Smith D.R."/>
            <person name="Doucette-Stamm L.A."/>
            <person name="Deloughery C."/>
            <person name="Lee H.-M."/>
            <person name="Dubois J."/>
            <person name="Aldredge T."/>
            <person name="Bashirzadeh R."/>
            <person name="Blakely D."/>
            <person name="Cook R."/>
            <person name="Gilbert K."/>
            <person name="Harrison D."/>
            <person name="Hoang L."/>
            <person name="Keagle P."/>
            <person name="Lumm W."/>
            <person name="Pothier B."/>
            <person name="Qiu D."/>
            <person name="Spadafora R."/>
            <person name="Vicare R."/>
            <person name="Wang Y."/>
            <person name="Wierzbowski J."/>
            <person name="Gibson R."/>
            <person name="Jiwani N."/>
            <person name="Caruso A."/>
            <person name="Bush D."/>
            <person name="Safer H."/>
            <person name="Patwell D."/>
            <person name="Prabhakar S."/>
            <person name="McDougall S."/>
            <person name="Shimer G."/>
            <person name="Goyal A."/>
            <person name="Pietrovski S."/>
            <person name="Church G.M."/>
            <person name="Daniels C.J."/>
            <person name="Mao J.-I."/>
            <person name="Rice P."/>
            <person name="Noelling J."/>
            <person name="Reeve J.N."/>
        </authorList>
    </citation>
    <scope>NUCLEOTIDE SEQUENCE [LARGE SCALE GENOMIC DNA]</scope>
    <source>
        <strain>ATCC 29096 / DSM 1053 / JCM 10044 / NBRC 100330 / Delta H</strain>
    </source>
</reference>
<organism>
    <name type="scientific">Methanothermobacter thermautotrophicus (strain ATCC 29096 / DSM 1053 / JCM 10044 / NBRC 100330 / Delta H)</name>
    <name type="common">Methanobacterium thermoautotrophicum</name>
    <dbReference type="NCBI Taxonomy" id="187420"/>
    <lineage>
        <taxon>Archaea</taxon>
        <taxon>Methanobacteriati</taxon>
        <taxon>Methanobacteriota</taxon>
        <taxon>Methanomada group</taxon>
        <taxon>Methanobacteria</taxon>
        <taxon>Methanobacteriales</taxon>
        <taxon>Methanobacteriaceae</taxon>
        <taxon>Methanothermobacter</taxon>
    </lineage>
</organism>
<dbReference type="EC" id="1.4.1.21" evidence="1"/>
<dbReference type="EMBL" id="AE000666">
    <property type="protein sequence ID" value="AAB85469.1"/>
    <property type="molecule type" value="Genomic_DNA"/>
</dbReference>
<dbReference type="PIR" id="C69230">
    <property type="entry name" value="C69230"/>
</dbReference>
<dbReference type="SMR" id="O27054"/>
<dbReference type="FunCoup" id="O27054">
    <property type="interactions" value="92"/>
</dbReference>
<dbReference type="STRING" id="187420.MTH_973"/>
<dbReference type="PaxDb" id="187420-MTH_973"/>
<dbReference type="EnsemblBacteria" id="AAB85469">
    <property type="protein sequence ID" value="AAB85469"/>
    <property type="gene ID" value="MTH_973"/>
</dbReference>
<dbReference type="KEGG" id="mth:MTH_973"/>
<dbReference type="PATRIC" id="fig|187420.15.peg.956"/>
<dbReference type="HOGENOM" id="CLU_089550_0_0_2"/>
<dbReference type="InParanoid" id="O27054"/>
<dbReference type="UniPathway" id="UPA00253">
    <property type="reaction ID" value="UER00456"/>
</dbReference>
<dbReference type="Proteomes" id="UP000005223">
    <property type="component" value="Chromosome"/>
</dbReference>
<dbReference type="GO" id="GO:0033735">
    <property type="term" value="F:aspartate dehydrogenase activity"/>
    <property type="evidence" value="ECO:0007669"/>
    <property type="project" value="UniProtKB-EC"/>
</dbReference>
<dbReference type="GO" id="GO:0051287">
    <property type="term" value="F:NAD binding"/>
    <property type="evidence" value="ECO:0007669"/>
    <property type="project" value="UniProtKB-UniRule"/>
</dbReference>
<dbReference type="GO" id="GO:0050661">
    <property type="term" value="F:NADP binding"/>
    <property type="evidence" value="ECO:0007669"/>
    <property type="project" value="UniProtKB-UniRule"/>
</dbReference>
<dbReference type="GO" id="GO:0016639">
    <property type="term" value="F:oxidoreductase activity, acting on the CH-NH2 group of donors, NAD or NADP as acceptor"/>
    <property type="evidence" value="ECO:0007669"/>
    <property type="project" value="UniProtKB-UniRule"/>
</dbReference>
<dbReference type="GO" id="GO:0009435">
    <property type="term" value="P:NAD biosynthetic process"/>
    <property type="evidence" value="ECO:0007669"/>
    <property type="project" value="UniProtKB-UniRule"/>
</dbReference>
<dbReference type="Gene3D" id="3.30.360.10">
    <property type="entry name" value="Dihydrodipicolinate Reductase, domain 2"/>
    <property type="match status" value="1"/>
</dbReference>
<dbReference type="Gene3D" id="3.40.50.720">
    <property type="entry name" value="NAD(P)-binding Rossmann-like Domain"/>
    <property type="match status" value="1"/>
</dbReference>
<dbReference type="HAMAP" id="MF_01265">
    <property type="entry name" value="NadX"/>
    <property type="match status" value="1"/>
</dbReference>
<dbReference type="InterPro" id="IPR005106">
    <property type="entry name" value="Asp/hSer_DH_NAD-bd"/>
</dbReference>
<dbReference type="InterPro" id="IPR002811">
    <property type="entry name" value="Asp_DH"/>
</dbReference>
<dbReference type="InterPro" id="IPR022487">
    <property type="entry name" value="Asp_DH_arc"/>
</dbReference>
<dbReference type="InterPro" id="IPR020626">
    <property type="entry name" value="Asp_DH_prok"/>
</dbReference>
<dbReference type="InterPro" id="IPR011182">
    <property type="entry name" value="L-Asp_DH"/>
</dbReference>
<dbReference type="InterPro" id="IPR036291">
    <property type="entry name" value="NAD(P)-bd_dom_sf"/>
</dbReference>
<dbReference type="NCBIfam" id="TIGR03855">
    <property type="entry name" value="NAD_NadX"/>
    <property type="match status" value="1"/>
</dbReference>
<dbReference type="NCBIfam" id="NF009829">
    <property type="entry name" value="PRK13303.1-4"/>
    <property type="match status" value="1"/>
</dbReference>
<dbReference type="NCBIfam" id="NF009830">
    <property type="entry name" value="PRK13304.1"/>
    <property type="match status" value="1"/>
</dbReference>
<dbReference type="PANTHER" id="PTHR31873:SF6">
    <property type="entry name" value="ASPARTATE DEHYDROGENASE DOMAIN-CONTAINING PROTEIN"/>
    <property type="match status" value="1"/>
</dbReference>
<dbReference type="PANTHER" id="PTHR31873">
    <property type="entry name" value="L-ASPARTATE DEHYDROGENASE-RELATED"/>
    <property type="match status" value="1"/>
</dbReference>
<dbReference type="Pfam" id="PF01958">
    <property type="entry name" value="Asp_DH_C"/>
    <property type="match status" value="1"/>
</dbReference>
<dbReference type="Pfam" id="PF03447">
    <property type="entry name" value="NAD_binding_3"/>
    <property type="match status" value="1"/>
</dbReference>
<dbReference type="PIRSF" id="PIRSF005227">
    <property type="entry name" value="Asp_dh_NAD_syn"/>
    <property type="match status" value="1"/>
</dbReference>
<dbReference type="SUPFAM" id="SSF55347">
    <property type="entry name" value="Glyceraldehyde-3-phosphate dehydrogenase-like, C-terminal domain"/>
    <property type="match status" value="1"/>
</dbReference>
<dbReference type="SUPFAM" id="SSF51735">
    <property type="entry name" value="NAD(P)-binding Rossmann-fold domains"/>
    <property type="match status" value="1"/>
</dbReference>